<sequence length="77" mass="8529">MAISAEELEKILKKSFPSSVIKITDLVGDQDHYALEISDAQFNGLSLINQHKLVKNALSEILNKKLHSISIKTISIP</sequence>
<proteinExistence type="evidence at protein level"/>
<protein>
    <recommendedName>
        <fullName>Uncharacterized protein RP812</fullName>
    </recommendedName>
</protein>
<keyword id="KW-0002">3D-structure</keyword>
<keyword id="KW-1185">Reference proteome</keyword>
<organism>
    <name type="scientific">Rickettsia prowazekii (strain Madrid E)</name>
    <dbReference type="NCBI Taxonomy" id="272947"/>
    <lineage>
        <taxon>Bacteria</taxon>
        <taxon>Pseudomonadati</taxon>
        <taxon>Pseudomonadota</taxon>
        <taxon>Alphaproteobacteria</taxon>
        <taxon>Rickettsiales</taxon>
        <taxon>Rickettsiaceae</taxon>
        <taxon>Rickettsieae</taxon>
        <taxon>Rickettsia</taxon>
        <taxon>typhus group</taxon>
    </lineage>
</organism>
<name>Y812_RICPR</name>
<feature type="chain" id="PRO_0000101419" description="Uncharacterized protein RP812">
    <location>
        <begin position="1"/>
        <end position="77"/>
    </location>
</feature>
<feature type="helix" evidence="1">
    <location>
        <begin position="5"/>
        <end position="12"/>
    </location>
</feature>
<feature type="turn" evidence="1">
    <location>
        <begin position="13"/>
        <end position="15"/>
    </location>
</feature>
<feature type="strand" evidence="1">
    <location>
        <begin position="17"/>
        <end position="19"/>
    </location>
</feature>
<feature type="strand" evidence="1">
    <location>
        <begin position="22"/>
        <end position="31"/>
    </location>
</feature>
<feature type="strand" evidence="1">
    <location>
        <begin position="33"/>
        <end position="44"/>
    </location>
</feature>
<feature type="helix" evidence="1">
    <location>
        <begin position="47"/>
        <end position="56"/>
    </location>
</feature>
<feature type="turn" evidence="1">
    <location>
        <begin position="57"/>
        <end position="61"/>
    </location>
</feature>
<feature type="strand" evidence="1">
    <location>
        <begin position="70"/>
        <end position="75"/>
    </location>
</feature>
<accession>Q9ZCE4</accession>
<evidence type="ECO:0007829" key="1">
    <source>
        <dbReference type="PDB" id="2MCQ"/>
    </source>
</evidence>
<gene>
    <name type="ordered locus">RP812</name>
</gene>
<reference key="1">
    <citation type="journal article" date="1998" name="Nature">
        <title>The genome sequence of Rickettsia prowazekii and the origin of mitochondria.</title>
        <authorList>
            <person name="Andersson S.G.E."/>
            <person name="Zomorodipour A."/>
            <person name="Andersson J.O."/>
            <person name="Sicheritz-Ponten T."/>
            <person name="Alsmark U.C.M."/>
            <person name="Podowski R.M."/>
            <person name="Naeslund A.K."/>
            <person name="Eriksson A.-S."/>
            <person name="Winkler H.H."/>
            <person name="Kurland C.G."/>
        </authorList>
    </citation>
    <scope>NUCLEOTIDE SEQUENCE [LARGE SCALE GENOMIC DNA]</scope>
    <source>
        <strain>Madrid E</strain>
    </source>
</reference>
<dbReference type="EMBL" id="AJ235273">
    <property type="protein sequence ID" value="CAA15238.1"/>
    <property type="molecule type" value="Genomic_DNA"/>
</dbReference>
<dbReference type="PIR" id="F71642">
    <property type="entry name" value="F71642"/>
</dbReference>
<dbReference type="RefSeq" id="NP_221162.1">
    <property type="nucleotide sequence ID" value="NC_000963.1"/>
</dbReference>
<dbReference type="RefSeq" id="WP_004596876.1">
    <property type="nucleotide sequence ID" value="NC_000963.1"/>
</dbReference>
<dbReference type="PDB" id="2MCQ">
    <property type="method" value="NMR"/>
    <property type="chains" value="A=1-77"/>
</dbReference>
<dbReference type="PDBsum" id="2MCQ"/>
<dbReference type="BMRB" id="Q9ZCE4"/>
<dbReference type="SMR" id="Q9ZCE4"/>
<dbReference type="STRING" id="272947.gene:17555881"/>
<dbReference type="EnsemblBacteria" id="CAA15238">
    <property type="protein sequence ID" value="CAA15238"/>
    <property type="gene ID" value="CAA15238"/>
</dbReference>
<dbReference type="KEGG" id="rpr:RP812"/>
<dbReference type="PATRIC" id="fig|272947.5.peg.848"/>
<dbReference type="eggNOG" id="COG0271">
    <property type="taxonomic scope" value="Bacteria"/>
</dbReference>
<dbReference type="HOGENOM" id="CLU_109462_4_2_5"/>
<dbReference type="OrthoDB" id="9796738at2"/>
<dbReference type="EvolutionaryTrace" id="Q9ZCE4"/>
<dbReference type="Proteomes" id="UP000002480">
    <property type="component" value="Chromosome"/>
</dbReference>
<dbReference type="Gene3D" id="3.30.300.90">
    <property type="entry name" value="BolA-like"/>
    <property type="match status" value="1"/>
</dbReference>
<dbReference type="InterPro" id="IPR002634">
    <property type="entry name" value="BolA"/>
</dbReference>
<dbReference type="InterPro" id="IPR036065">
    <property type="entry name" value="BolA-like_sf"/>
</dbReference>
<dbReference type="Pfam" id="PF01722">
    <property type="entry name" value="BolA"/>
    <property type="match status" value="1"/>
</dbReference>
<dbReference type="PIRSF" id="PIRSF003113">
    <property type="entry name" value="BolA"/>
    <property type="match status" value="1"/>
</dbReference>
<dbReference type="SUPFAM" id="SSF82657">
    <property type="entry name" value="BolA-like"/>
    <property type="match status" value="1"/>
</dbReference>